<reference key="1">
    <citation type="journal article" date="2009" name="J. Bacteriol.">
        <title>Complete genome sequence of Macrococcus caseolyticus strain JCSCS5402, reflecting the ancestral genome of the human-pathogenic staphylococci.</title>
        <authorList>
            <person name="Baba T."/>
            <person name="Kuwahara-Arai K."/>
            <person name="Uchiyama I."/>
            <person name="Takeuchi F."/>
            <person name="Ito T."/>
            <person name="Hiramatsu K."/>
        </authorList>
    </citation>
    <scope>NUCLEOTIDE SEQUENCE [LARGE SCALE GENOMIC DNA]</scope>
    <source>
        <strain>JCSC5402</strain>
    </source>
</reference>
<comment type="function">
    <text evidence="1">Transmembrane (T) component of an energy-coupling factor (ECF) ABC-transporter complex. Unlike classic ABC transporters this ECF transporter provides the energy necessary to transport a number of different substrates.</text>
</comment>
<comment type="subunit">
    <text evidence="1">Forms a stable energy-coupling factor (ECF) transporter complex composed of 2 membrane-embedded substrate-binding proteins (S component), 2 ATP-binding proteins (A component) and 2 transmembrane proteins (T component). May be able to interact with more than 1 S component at a time (By similarity).</text>
</comment>
<comment type="subcellular location">
    <subcellularLocation>
        <location evidence="1">Cell membrane</location>
        <topology evidence="1">Multi-pass membrane protein</topology>
    </subcellularLocation>
</comment>
<comment type="similarity">
    <text evidence="1">Belongs to the energy-coupling factor EcfT family.</text>
</comment>
<accession>B9E9M1</accession>
<sequence length="265" mass="30296">MLDKMILGRFVPLQSFVHRLDPRMKMVFVFIMMILIFLMNNWQTYAVGIILIFIILKASNLSFMFLFNGLKPILFLLIFTLLMHIFLTKGGATLVDYGIINIQSQGVIMGIMISLRFILIIFLTTIMTLTTNPIELTDAIESLLKPFKKLKLPVHELALMMSIALRFIPTLMDETQKVMKAQMSRGSDMTAGTLKERIKAVIPLLVPLFVSAFKRAEDLAIAMEVRGYKGDAGRTKYRKLDWHTYDTLSLLTLIPITLLILYLKN</sequence>
<keyword id="KW-1003">Cell membrane</keyword>
<keyword id="KW-0472">Membrane</keyword>
<keyword id="KW-1185">Reference proteome</keyword>
<keyword id="KW-0812">Transmembrane</keyword>
<keyword id="KW-1133">Transmembrane helix</keyword>
<keyword id="KW-0813">Transport</keyword>
<proteinExistence type="inferred from homology"/>
<name>ECFT_MACCJ</name>
<dbReference type="EMBL" id="AP009484">
    <property type="protein sequence ID" value="BAH16932.1"/>
    <property type="molecule type" value="Genomic_DNA"/>
</dbReference>
<dbReference type="RefSeq" id="WP_012656133.1">
    <property type="nucleotide sequence ID" value="NC_011999.1"/>
</dbReference>
<dbReference type="SMR" id="B9E9M1"/>
<dbReference type="STRING" id="458233.MCCL_0225"/>
<dbReference type="KEGG" id="mcl:MCCL_0225"/>
<dbReference type="eggNOG" id="COG0619">
    <property type="taxonomic scope" value="Bacteria"/>
</dbReference>
<dbReference type="HOGENOM" id="CLU_056469_2_2_9"/>
<dbReference type="OrthoDB" id="8075495at2"/>
<dbReference type="Proteomes" id="UP000001383">
    <property type="component" value="Chromosome"/>
</dbReference>
<dbReference type="GO" id="GO:0005886">
    <property type="term" value="C:plasma membrane"/>
    <property type="evidence" value="ECO:0007669"/>
    <property type="project" value="UniProtKB-SubCell"/>
</dbReference>
<dbReference type="GO" id="GO:0022857">
    <property type="term" value="F:transmembrane transporter activity"/>
    <property type="evidence" value="ECO:0007669"/>
    <property type="project" value="UniProtKB-UniRule"/>
</dbReference>
<dbReference type="CDD" id="cd16914">
    <property type="entry name" value="EcfT"/>
    <property type="match status" value="1"/>
</dbReference>
<dbReference type="HAMAP" id="MF_01461">
    <property type="entry name" value="EcfT"/>
    <property type="match status" value="1"/>
</dbReference>
<dbReference type="InterPro" id="IPR003339">
    <property type="entry name" value="ABC/ECF_trnsptr_transmembrane"/>
</dbReference>
<dbReference type="InterPro" id="IPR024919">
    <property type="entry name" value="EcfT"/>
</dbReference>
<dbReference type="PANTHER" id="PTHR33514">
    <property type="entry name" value="PROTEIN ABCI12, CHLOROPLASTIC"/>
    <property type="match status" value="1"/>
</dbReference>
<dbReference type="PANTHER" id="PTHR33514:SF13">
    <property type="entry name" value="PROTEIN ABCI12, CHLOROPLASTIC"/>
    <property type="match status" value="1"/>
</dbReference>
<dbReference type="Pfam" id="PF02361">
    <property type="entry name" value="CbiQ"/>
    <property type="match status" value="1"/>
</dbReference>
<gene>
    <name evidence="1" type="primary">ecfT</name>
    <name type="ordered locus">MCCL_0225</name>
</gene>
<feature type="chain" id="PRO_0000408999" description="Energy-coupling factor transporter transmembrane protein EcfT">
    <location>
        <begin position="1"/>
        <end position="265"/>
    </location>
</feature>
<feature type="transmembrane region" description="Helical" evidence="1">
    <location>
        <begin position="26"/>
        <end position="46"/>
    </location>
</feature>
<feature type="transmembrane region" description="Helical" evidence="1">
    <location>
        <begin position="47"/>
        <end position="67"/>
    </location>
</feature>
<feature type="transmembrane region" description="Helical" evidence="1">
    <location>
        <begin position="72"/>
        <end position="92"/>
    </location>
</feature>
<feature type="transmembrane region" description="Helical" evidence="1">
    <location>
        <begin position="107"/>
        <end position="127"/>
    </location>
</feature>
<feature type="transmembrane region" description="Helical" evidence="1">
    <location>
        <begin position="152"/>
        <end position="172"/>
    </location>
</feature>
<feature type="transmembrane region" description="Helical" evidence="1">
    <location>
        <begin position="243"/>
        <end position="263"/>
    </location>
</feature>
<protein>
    <recommendedName>
        <fullName evidence="1">Energy-coupling factor transporter transmembrane protein EcfT</fullName>
        <shortName evidence="1">ECF transporter T component EcfT</shortName>
    </recommendedName>
</protein>
<organism>
    <name type="scientific">Macrococcus caseolyticus (strain JCSC5402)</name>
    <name type="common">Macrococcoides caseolyticum</name>
    <dbReference type="NCBI Taxonomy" id="458233"/>
    <lineage>
        <taxon>Bacteria</taxon>
        <taxon>Bacillati</taxon>
        <taxon>Bacillota</taxon>
        <taxon>Bacilli</taxon>
        <taxon>Bacillales</taxon>
        <taxon>Staphylococcaceae</taxon>
        <taxon>Macrococcoides</taxon>
    </lineage>
</organism>
<evidence type="ECO:0000255" key="1">
    <source>
        <dbReference type="HAMAP-Rule" id="MF_01461"/>
    </source>
</evidence>